<feature type="chain" id="PRO_0000092474" description="Macrolide export ATP-binding/permease protein MacB">
    <location>
        <begin position="1"/>
        <end position="648"/>
    </location>
</feature>
<feature type="topological domain" description="Cytoplasmic" evidence="1">
    <location>
        <begin position="1"/>
        <end position="272"/>
    </location>
</feature>
<feature type="transmembrane region" description="Helical" evidence="2">
    <location>
        <begin position="273"/>
        <end position="293"/>
    </location>
</feature>
<feature type="topological domain" description="Periplasmic" evidence="1">
    <location>
        <begin position="294"/>
        <end position="522"/>
    </location>
</feature>
<feature type="transmembrane region" description="Helical" evidence="2">
    <location>
        <begin position="523"/>
        <end position="543"/>
    </location>
</feature>
<feature type="topological domain" description="Cytoplasmic" evidence="1">
    <location>
        <begin position="544"/>
        <end position="575"/>
    </location>
</feature>
<feature type="transmembrane region" description="Helical" evidence="2">
    <location>
        <begin position="576"/>
        <end position="596"/>
    </location>
</feature>
<feature type="topological domain" description="Periplasmic" evidence="1">
    <location>
        <begin position="597"/>
        <end position="610"/>
    </location>
</feature>
<feature type="transmembrane region" description="Helical" evidence="2">
    <location>
        <begin position="611"/>
        <end position="631"/>
    </location>
</feature>
<feature type="topological domain" description="Cytoplasmic" evidence="1">
    <location>
        <begin position="632"/>
        <end position="648"/>
    </location>
</feature>
<feature type="domain" description="ABC transporter" evidence="2">
    <location>
        <begin position="5"/>
        <end position="243"/>
    </location>
</feature>
<feature type="binding site" evidence="2">
    <location>
        <begin position="41"/>
        <end position="48"/>
    </location>
    <ligand>
        <name>ATP</name>
        <dbReference type="ChEBI" id="CHEBI:30616"/>
    </ligand>
</feature>
<feature type="mutagenesis site" description="Lack of activity." evidence="4">
    <original>K</original>
    <variation>L</variation>
    <location>
        <position position="47"/>
    </location>
</feature>
<feature type="mutagenesis site" description="Lack of activity." evidence="4">
    <original>D</original>
    <variation>N</variation>
    <location>
        <position position="169"/>
    </location>
</feature>
<feature type="strand" evidence="9">
    <location>
        <begin position="4"/>
        <end position="16"/>
    </location>
</feature>
<feature type="strand" evidence="9">
    <location>
        <begin position="19"/>
        <end position="31"/>
    </location>
</feature>
<feature type="strand" evidence="9">
    <location>
        <begin position="36"/>
        <end position="40"/>
    </location>
</feature>
<feature type="helix" evidence="9">
    <location>
        <begin position="47"/>
        <end position="54"/>
    </location>
</feature>
<feature type="strand" evidence="9">
    <location>
        <begin position="61"/>
        <end position="67"/>
    </location>
</feature>
<feature type="helix" evidence="9">
    <location>
        <begin position="72"/>
        <end position="74"/>
    </location>
</feature>
<feature type="helix" evidence="9">
    <location>
        <begin position="77"/>
        <end position="87"/>
    </location>
</feature>
<feature type="strand" evidence="9">
    <location>
        <begin position="88"/>
        <end position="91"/>
    </location>
</feature>
<feature type="strand" evidence="10">
    <location>
        <begin position="99"/>
        <end position="101"/>
    </location>
</feature>
<feature type="helix" evidence="9">
    <location>
        <begin position="103"/>
        <end position="112"/>
    </location>
</feature>
<feature type="turn" evidence="9">
    <location>
        <begin position="113"/>
        <end position="115"/>
    </location>
</feature>
<feature type="helix" evidence="9">
    <location>
        <begin position="118"/>
        <end position="131"/>
    </location>
</feature>
<feature type="helix" evidence="9">
    <location>
        <begin position="135"/>
        <end position="137"/>
    </location>
</feature>
<feature type="helix" evidence="9">
    <location>
        <begin position="142"/>
        <end position="144"/>
    </location>
</feature>
<feature type="helix" evidence="9">
    <location>
        <begin position="147"/>
        <end position="158"/>
    </location>
</feature>
<feature type="turn" evidence="9">
    <location>
        <begin position="159"/>
        <end position="161"/>
    </location>
</feature>
<feature type="strand" evidence="9">
    <location>
        <begin position="164"/>
        <end position="170"/>
    </location>
</feature>
<feature type="turn" evidence="9">
    <location>
        <begin position="171"/>
        <end position="174"/>
    </location>
</feature>
<feature type="helix" evidence="9">
    <location>
        <begin position="177"/>
        <end position="192"/>
    </location>
</feature>
<feature type="strand" evidence="9">
    <location>
        <begin position="196"/>
        <end position="202"/>
    </location>
</feature>
<feature type="helix" evidence="9">
    <location>
        <begin position="204"/>
        <end position="207"/>
    </location>
</feature>
<feature type="strand" evidence="9">
    <location>
        <begin position="210"/>
        <end position="217"/>
    </location>
</feature>
<feature type="strand" evidence="9">
    <location>
        <begin position="220"/>
        <end position="223"/>
    </location>
</feature>
<feature type="helix" evidence="10">
    <location>
        <begin position="248"/>
        <end position="267"/>
    </location>
</feature>
<feature type="helix" evidence="10">
    <location>
        <begin position="269"/>
        <end position="305"/>
    </location>
</feature>
<feature type="strand" evidence="8">
    <location>
        <begin position="311"/>
        <end position="319"/>
    </location>
</feature>
<feature type="helix" evidence="8">
    <location>
        <begin position="325"/>
        <end position="328"/>
    </location>
</feature>
<feature type="helix" evidence="8">
    <location>
        <begin position="333"/>
        <end position="340"/>
    </location>
</feature>
<feature type="strand" evidence="8">
    <location>
        <begin position="345"/>
        <end position="360"/>
    </location>
</feature>
<feature type="strand" evidence="8">
    <location>
        <begin position="363"/>
        <end position="372"/>
    </location>
</feature>
<feature type="helix" evidence="8">
    <location>
        <begin position="376"/>
        <end position="380"/>
    </location>
</feature>
<feature type="strand" evidence="8">
    <location>
        <begin position="383"/>
        <end position="387"/>
    </location>
</feature>
<feature type="helix" evidence="8">
    <location>
        <begin position="392"/>
        <end position="396"/>
    </location>
</feature>
<feature type="strand" evidence="8">
    <location>
        <begin position="401"/>
        <end position="405"/>
    </location>
</feature>
<feature type="helix" evidence="8">
    <location>
        <begin position="406"/>
        <end position="412"/>
    </location>
</feature>
<feature type="strand" evidence="8">
    <location>
        <begin position="423"/>
        <end position="426"/>
    </location>
</feature>
<feature type="strand" evidence="8">
    <location>
        <begin position="429"/>
        <end position="438"/>
    </location>
</feature>
<feature type="helix" evidence="10">
    <location>
        <begin position="444"/>
        <end position="446"/>
    </location>
</feature>
<feature type="strand" evidence="8">
    <location>
        <begin position="451"/>
        <end position="455"/>
    </location>
</feature>
<feature type="helix" evidence="8">
    <location>
        <begin position="456"/>
        <end position="459"/>
    </location>
</feature>
<feature type="turn" evidence="10">
    <location>
        <begin position="460"/>
        <end position="464"/>
    </location>
</feature>
<feature type="strand" evidence="8">
    <location>
        <begin position="465"/>
        <end position="476"/>
    </location>
</feature>
<feature type="helix" evidence="8">
    <location>
        <begin position="482"/>
        <end position="497"/>
    </location>
</feature>
<feature type="strand" evidence="8">
    <location>
        <begin position="502"/>
        <end position="507"/>
    </location>
</feature>
<feature type="helix" evidence="10">
    <location>
        <begin position="508"/>
        <end position="550"/>
    </location>
</feature>
<feature type="helix" evidence="10">
    <location>
        <begin position="552"/>
        <end position="560"/>
    </location>
</feature>
<feature type="helix" evidence="10">
    <location>
        <begin position="565"/>
        <end position="600"/>
    </location>
</feature>
<feature type="helix" evidence="10">
    <location>
        <begin position="611"/>
        <end position="638"/>
    </location>
</feature>
<feature type="helix" evidence="10">
    <location>
        <begin position="641"/>
        <end position="646"/>
    </location>
</feature>
<gene>
    <name evidence="2" type="primary">macB</name>
    <name type="synonym">ybjZ</name>
    <name type="ordered locus">b0879</name>
    <name type="ordered locus">JW0863</name>
</gene>
<reference key="1">
    <citation type="journal article" date="2001" name="J. Bacteriol.">
        <title>Novel macrolide-specific ABC-type efflux transporter in Escherichia coli.</title>
        <authorList>
            <person name="Kobayashi N."/>
            <person name="Nishino K."/>
            <person name="Yamaguchi A."/>
        </authorList>
    </citation>
    <scope>NUCLEOTIDE SEQUENCE [GENOMIC DNA]</scope>
    <scope>FUNCTION IN MACROLIDE TRANSPORT</scope>
    <scope>SUBCELLULAR LOCATION</scope>
    <source>
        <strain>K12 / W3104 / ATCC 19020</strain>
    </source>
</reference>
<reference key="2">
    <citation type="journal article" date="1996" name="DNA Res.">
        <title>A 718-kb DNA sequence of the Escherichia coli K-12 genome corresponding to the 12.7-28.0 min region on the linkage map.</title>
        <authorList>
            <person name="Oshima T."/>
            <person name="Aiba H."/>
            <person name="Baba T."/>
            <person name="Fujita K."/>
            <person name="Hayashi K."/>
            <person name="Honjo A."/>
            <person name="Ikemoto K."/>
            <person name="Inada T."/>
            <person name="Itoh T."/>
            <person name="Kajihara M."/>
            <person name="Kanai K."/>
            <person name="Kashimoto K."/>
            <person name="Kimura S."/>
            <person name="Kitagawa M."/>
            <person name="Makino K."/>
            <person name="Masuda S."/>
            <person name="Miki T."/>
            <person name="Mizobuchi K."/>
            <person name="Mori H."/>
            <person name="Motomura K."/>
            <person name="Nakamura Y."/>
            <person name="Nashimoto H."/>
            <person name="Nishio Y."/>
            <person name="Saito N."/>
            <person name="Sampei G."/>
            <person name="Seki Y."/>
            <person name="Tagami H."/>
            <person name="Takemoto K."/>
            <person name="Wada C."/>
            <person name="Yamamoto Y."/>
            <person name="Yano M."/>
            <person name="Horiuchi T."/>
        </authorList>
    </citation>
    <scope>NUCLEOTIDE SEQUENCE [LARGE SCALE GENOMIC DNA]</scope>
    <source>
        <strain>K12 / W3110 / ATCC 27325 / DSM 5911</strain>
    </source>
</reference>
<reference key="3">
    <citation type="journal article" date="1997" name="Science">
        <title>The complete genome sequence of Escherichia coli K-12.</title>
        <authorList>
            <person name="Blattner F.R."/>
            <person name="Plunkett G. III"/>
            <person name="Bloch C.A."/>
            <person name="Perna N.T."/>
            <person name="Burland V."/>
            <person name="Riley M."/>
            <person name="Collado-Vides J."/>
            <person name="Glasner J.D."/>
            <person name="Rode C.K."/>
            <person name="Mayhew G.F."/>
            <person name="Gregor J."/>
            <person name="Davis N.W."/>
            <person name="Kirkpatrick H.A."/>
            <person name="Goeden M.A."/>
            <person name="Rose D.J."/>
            <person name="Mau B."/>
            <person name="Shao Y."/>
        </authorList>
    </citation>
    <scope>NUCLEOTIDE SEQUENCE [LARGE SCALE GENOMIC DNA]</scope>
    <source>
        <strain>K12 / MG1655 / ATCC 47076</strain>
    </source>
</reference>
<reference key="4">
    <citation type="journal article" date="2006" name="Mol. Syst. Biol.">
        <title>Highly accurate genome sequences of Escherichia coli K-12 strains MG1655 and W3110.</title>
        <authorList>
            <person name="Hayashi K."/>
            <person name="Morooka N."/>
            <person name="Yamamoto Y."/>
            <person name="Fujita K."/>
            <person name="Isono K."/>
            <person name="Choi S."/>
            <person name="Ohtsubo E."/>
            <person name="Baba T."/>
            <person name="Wanner B.L."/>
            <person name="Mori H."/>
            <person name="Horiuchi T."/>
        </authorList>
    </citation>
    <scope>NUCLEOTIDE SEQUENCE [LARGE SCALE GENOMIC DNA]</scope>
    <source>
        <strain>K12 / W3110 / ATCC 27325 / DSM 5911</strain>
    </source>
</reference>
<reference key="5">
    <citation type="journal article" date="2003" name="FEBS Lett.">
        <title>Membrane topology of ABC-type macrolide antibiotic exporter MacB in Escherichia coli.</title>
        <authorList>
            <person name="Kobayashi N."/>
            <person name="Nishino K."/>
            <person name="Hirata T."/>
            <person name="Yamaguchi A."/>
        </authorList>
    </citation>
    <scope>TOPOLOGY</scope>
    <source>
        <strain>K12 / W3104 / ATCC 19020</strain>
    </source>
</reference>
<reference key="6">
    <citation type="journal article" date="2007" name="Mol. Microbiol.">
        <title>Reconstitution of the Escherichia coli macrolide transporter: the periplasmic membrane fusion protein MacA stimulates the ATPase activity of MacB.</title>
        <authorList>
            <person name="Tikhonova E.B."/>
            <person name="Devroy V.K."/>
            <person name="Lau S.Y."/>
            <person name="Zgurskaya H.I."/>
        </authorList>
    </citation>
    <scope>FUNCTION</scope>
    <scope>ACTIVITY REGULATION</scope>
    <scope>BIOPHYSICOCHEMICAL PROPERTIES</scope>
    <scope>SUBUNIT</scope>
    <scope>INTERACTION WITH MACA</scope>
    <scope>SUBCELLULAR LOCATION</scope>
    <scope>MUTAGENESIS OF LYS-47 AND ASP-169</scope>
    <source>
        <strain>K12</strain>
    </source>
</reference>
<reference key="7">
    <citation type="journal article" date="2009" name="J. Biol. Chem.">
        <title>MacB ABC transporter is a dimer whose ATPase activity and macrolide-binding capacity are regulated by the membrane fusion protein MacA.</title>
        <authorList>
            <person name="Lin H.T."/>
            <person name="Bavro V.N."/>
            <person name="Barrera N.P."/>
            <person name="Frankish H.M."/>
            <person name="Velamakanni S."/>
            <person name="van Veen H.W."/>
            <person name="Robinson C.V."/>
            <person name="Borges-Walmsley M.I."/>
            <person name="Walmsley A.R."/>
        </authorList>
    </citation>
    <scope>FUNCTION</scope>
    <scope>ACTIVITY REGULATION</scope>
    <scope>SUBUNIT</scope>
    <scope>INTERACTION WITH MACA</scope>
</reference>
<reference key="8">
    <citation type="journal article" date="2011" name="Mol. Microbiol.">
        <title>The periplasmic membrane proximal domain of MacA acts as a switch in stimulation of ATP hydrolysis by MacB transporter.</title>
        <authorList>
            <person name="Modali S.D."/>
            <person name="Zgurskaya H.I."/>
        </authorList>
    </citation>
    <scope>ACTIVITY REGULATION</scope>
    <scope>INTERACTION WITH MACA</scope>
</reference>
<reference key="9">
    <citation type="journal article" date="2013" name="J. Bacteriol.">
        <title>MacA, a periplasmic membrane fusion protein of the macrolide transporter MacAB-TolC, binds lipopolysaccharide core specifically and with high affinity.</title>
        <authorList>
            <person name="Lu S."/>
            <person name="Zgurskaya H.I."/>
        </authorList>
    </citation>
    <scope>FUNCTION</scope>
</reference>
<dbReference type="EC" id="7.6.2.-" evidence="2"/>
<dbReference type="EMBL" id="AB071146">
    <property type="protein sequence ID" value="BAB64542.1"/>
    <property type="molecule type" value="Genomic_DNA"/>
</dbReference>
<dbReference type="EMBL" id="U00096">
    <property type="protein sequence ID" value="AAC73966.1"/>
    <property type="molecule type" value="Genomic_DNA"/>
</dbReference>
<dbReference type="EMBL" id="AP009048">
    <property type="protein sequence ID" value="BAA35598.1"/>
    <property type="molecule type" value="Genomic_DNA"/>
</dbReference>
<dbReference type="PIR" id="G64826">
    <property type="entry name" value="G64826"/>
</dbReference>
<dbReference type="RefSeq" id="NP_415400.1">
    <property type="nucleotide sequence ID" value="NC_000913.3"/>
</dbReference>
<dbReference type="RefSeq" id="WP_000188144.1">
    <property type="nucleotide sequence ID" value="NZ_SSZK01000002.1"/>
</dbReference>
<dbReference type="PDB" id="5LJ8">
    <property type="method" value="X-ray"/>
    <property type="resolution" value="1.95 A"/>
    <property type="chains" value="A/B=309-508"/>
</dbReference>
<dbReference type="PDB" id="5LJ9">
    <property type="method" value="X-ray"/>
    <property type="resolution" value="2.30 A"/>
    <property type="chains" value="A/B/C=1-223"/>
</dbReference>
<dbReference type="PDB" id="5LJA">
    <property type="method" value="X-ray"/>
    <property type="resolution" value="2.40 A"/>
    <property type="chains" value="A=1-223"/>
</dbReference>
<dbReference type="PDB" id="5NIK">
    <property type="method" value="EM"/>
    <property type="resolution" value="3.30 A"/>
    <property type="chains" value="J/K=1-648"/>
</dbReference>
<dbReference type="PDB" id="5NIL">
    <property type="method" value="EM"/>
    <property type="resolution" value="5.30 A"/>
    <property type="chains" value="J/K=1-648"/>
</dbReference>
<dbReference type="PDBsum" id="5LJ8"/>
<dbReference type="PDBsum" id="5LJ9"/>
<dbReference type="PDBsum" id="5LJA"/>
<dbReference type="PDBsum" id="5NIK"/>
<dbReference type="PDBsum" id="5NIL"/>
<dbReference type="EMDB" id="EMD-3652"/>
<dbReference type="EMDB" id="EMD-3653"/>
<dbReference type="SMR" id="P75831"/>
<dbReference type="BioGRID" id="4261698">
    <property type="interactions" value="112"/>
</dbReference>
<dbReference type="ComplexPortal" id="CPX-2107">
    <property type="entry name" value="MacAB-TolC ABC transporter complex"/>
</dbReference>
<dbReference type="FunCoup" id="P75831">
    <property type="interactions" value="495"/>
</dbReference>
<dbReference type="IntAct" id="P75831">
    <property type="interactions" value="3"/>
</dbReference>
<dbReference type="STRING" id="511145.b0879"/>
<dbReference type="TCDB" id="3.A.1.122.1">
    <property type="family name" value="the atp-binding cassette (abc) superfamily"/>
</dbReference>
<dbReference type="jPOST" id="P75831"/>
<dbReference type="PaxDb" id="511145-b0879"/>
<dbReference type="EnsemblBacteria" id="AAC73966">
    <property type="protein sequence ID" value="AAC73966"/>
    <property type="gene ID" value="b0879"/>
</dbReference>
<dbReference type="GeneID" id="945164"/>
<dbReference type="KEGG" id="ecj:JW0863"/>
<dbReference type="KEGG" id="eco:b0879"/>
<dbReference type="KEGG" id="ecoc:C3026_05460"/>
<dbReference type="PATRIC" id="fig|1411691.4.peg.1398"/>
<dbReference type="EchoBASE" id="EB3459"/>
<dbReference type="eggNOG" id="COG0577">
    <property type="taxonomic scope" value="Bacteria"/>
</dbReference>
<dbReference type="eggNOG" id="COG1136">
    <property type="taxonomic scope" value="Bacteria"/>
</dbReference>
<dbReference type="HOGENOM" id="CLU_000604_78_2_6"/>
<dbReference type="InParanoid" id="P75831"/>
<dbReference type="OMA" id="RINFKVI"/>
<dbReference type="OrthoDB" id="9770036at2"/>
<dbReference type="PhylomeDB" id="P75831"/>
<dbReference type="BioCyc" id="EcoCyc:MACB"/>
<dbReference type="BioCyc" id="MetaCyc:MACB"/>
<dbReference type="PRO" id="PR:P75831"/>
<dbReference type="Proteomes" id="UP000000625">
    <property type="component" value="Chromosome"/>
</dbReference>
<dbReference type="GO" id="GO:1990196">
    <property type="term" value="C:MacAB-TolC complex"/>
    <property type="evidence" value="ECO:0000314"/>
    <property type="project" value="EcoCyc"/>
</dbReference>
<dbReference type="GO" id="GO:0016020">
    <property type="term" value="C:membrane"/>
    <property type="evidence" value="ECO:0000314"/>
    <property type="project" value="EcoliWiki"/>
</dbReference>
<dbReference type="GO" id="GO:0005886">
    <property type="term" value="C:plasma membrane"/>
    <property type="evidence" value="ECO:0000314"/>
    <property type="project" value="EcoCyc"/>
</dbReference>
<dbReference type="GO" id="GO:0008559">
    <property type="term" value="F:ABC-type xenobiotic transporter activity"/>
    <property type="evidence" value="ECO:0000314"/>
    <property type="project" value="EcoCyc"/>
</dbReference>
<dbReference type="GO" id="GO:0005524">
    <property type="term" value="F:ATP binding"/>
    <property type="evidence" value="ECO:0007669"/>
    <property type="project" value="UniProtKB-KW"/>
</dbReference>
<dbReference type="GO" id="GO:0016887">
    <property type="term" value="F:ATP hydrolysis activity"/>
    <property type="evidence" value="ECO:0007669"/>
    <property type="project" value="InterPro"/>
</dbReference>
<dbReference type="GO" id="GO:0042802">
    <property type="term" value="F:identical protein binding"/>
    <property type="evidence" value="ECO:0000353"/>
    <property type="project" value="IntAct"/>
</dbReference>
<dbReference type="GO" id="GO:0042897">
    <property type="term" value="F:polymyxin transmembrane transporter activity"/>
    <property type="evidence" value="ECO:0000269"/>
    <property type="project" value="EcoCyc"/>
</dbReference>
<dbReference type="GO" id="GO:0042803">
    <property type="term" value="F:protein homodimerization activity"/>
    <property type="evidence" value="ECO:0000314"/>
    <property type="project" value="EcoCyc"/>
</dbReference>
<dbReference type="GO" id="GO:0022857">
    <property type="term" value="F:transmembrane transporter activity"/>
    <property type="evidence" value="ECO:0000318"/>
    <property type="project" value="GO_Central"/>
</dbReference>
<dbReference type="GO" id="GO:0042893">
    <property type="term" value="P:polymyxin transport"/>
    <property type="evidence" value="ECO:0000269"/>
    <property type="project" value="EcoCyc"/>
</dbReference>
<dbReference type="GO" id="GO:0046677">
    <property type="term" value="P:response to antibiotic"/>
    <property type="evidence" value="ECO:0000314"/>
    <property type="project" value="EcoCyc"/>
</dbReference>
<dbReference type="GO" id="GO:1990961">
    <property type="term" value="P:xenobiotic detoxification by transmembrane export across the plasma membrane"/>
    <property type="evidence" value="ECO:0000314"/>
    <property type="project" value="ComplexPortal"/>
</dbReference>
<dbReference type="CDD" id="cd03255">
    <property type="entry name" value="ABC_MJ0796_LolCDE_FtsE"/>
    <property type="match status" value="1"/>
</dbReference>
<dbReference type="FunFam" id="3.40.50.300:FF:000032">
    <property type="entry name" value="Export ABC transporter ATP-binding protein"/>
    <property type="match status" value="1"/>
</dbReference>
<dbReference type="Gene3D" id="3.40.50.300">
    <property type="entry name" value="P-loop containing nucleotide triphosphate hydrolases"/>
    <property type="match status" value="1"/>
</dbReference>
<dbReference type="InterPro" id="IPR003593">
    <property type="entry name" value="AAA+_ATPase"/>
</dbReference>
<dbReference type="InterPro" id="IPR003838">
    <property type="entry name" value="ABC3_permease_C"/>
</dbReference>
<dbReference type="InterPro" id="IPR003439">
    <property type="entry name" value="ABC_transporter-like_ATP-bd"/>
</dbReference>
<dbReference type="InterPro" id="IPR017871">
    <property type="entry name" value="ABC_transporter-like_CS"/>
</dbReference>
<dbReference type="InterPro" id="IPR017911">
    <property type="entry name" value="MacB-like_ATP-bd"/>
</dbReference>
<dbReference type="InterPro" id="IPR025857">
    <property type="entry name" value="MacB_PCD"/>
</dbReference>
<dbReference type="InterPro" id="IPR050250">
    <property type="entry name" value="Macrolide_Exporter_MacB"/>
</dbReference>
<dbReference type="InterPro" id="IPR027417">
    <property type="entry name" value="P-loop_NTPase"/>
</dbReference>
<dbReference type="NCBIfam" id="NF007826">
    <property type="entry name" value="PRK10535.1"/>
    <property type="match status" value="1"/>
</dbReference>
<dbReference type="PANTHER" id="PTHR30572:SF7">
    <property type="entry name" value="MACROLIDE EXPORT ATP-BINDING_PERMEASE PROTEIN MACB"/>
    <property type="match status" value="1"/>
</dbReference>
<dbReference type="PANTHER" id="PTHR30572">
    <property type="entry name" value="MEMBRANE COMPONENT OF TRANSPORTER-RELATED"/>
    <property type="match status" value="1"/>
</dbReference>
<dbReference type="Pfam" id="PF00005">
    <property type="entry name" value="ABC_tran"/>
    <property type="match status" value="1"/>
</dbReference>
<dbReference type="Pfam" id="PF02687">
    <property type="entry name" value="FtsX"/>
    <property type="match status" value="1"/>
</dbReference>
<dbReference type="Pfam" id="PF12704">
    <property type="entry name" value="MacB_PCD"/>
    <property type="match status" value="1"/>
</dbReference>
<dbReference type="SMART" id="SM00382">
    <property type="entry name" value="AAA"/>
    <property type="match status" value="1"/>
</dbReference>
<dbReference type="SUPFAM" id="SSF52540">
    <property type="entry name" value="P-loop containing nucleoside triphosphate hydrolases"/>
    <property type="match status" value="1"/>
</dbReference>
<dbReference type="PROSITE" id="PS00211">
    <property type="entry name" value="ABC_TRANSPORTER_1"/>
    <property type="match status" value="1"/>
</dbReference>
<dbReference type="PROSITE" id="PS50893">
    <property type="entry name" value="ABC_TRANSPORTER_2"/>
    <property type="match status" value="1"/>
</dbReference>
<dbReference type="PROSITE" id="PS51267">
    <property type="entry name" value="MACB"/>
    <property type="match status" value="1"/>
</dbReference>
<name>MACB_ECOLI</name>
<proteinExistence type="evidence at protein level"/>
<protein>
    <recommendedName>
        <fullName evidence="2">Macrolide export ATP-binding/permease protein MacB</fullName>
        <ecNumber evidence="2">7.6.2.-</ecNumber>
    </recommendedName>
</protein>
<evidence type="ECO:0000255" key="1"/>
<evidence type="ECO:0000255" key="2">
    <source>
        <dbReference type="HAMAP-Rule" id="MF_01720"/>
    </source>
</evidence>
<evidence type="ECO:0000269" key="3">
    <source>
    </source>
</evidence>
<evidence type="ECO:0000269" key="4">
    <source>
    </source>
</evidence>
<evidence type="ECO:0000269" key="5">
    <source>
    </source>
</evidence>
<evidence type="ECO:0000269" key="6">
    <source>
    </source>
</evidence>
<evidence type="ECO:0000269" key="7">
    <source>
    </source>
</evidence>
<evidence type="ECO:0007829" key="8">
    <source>
        <dbReference type="PDB" id="5LJ8"/>
    </source>
</evidence>
<evidence type="ECO:0007829" key="9">
    <source>
        <dbReference type="PDB" id="5LJ9"/>
    </source>
</evidence>
<evidence type="ECO:0007829" key="10">
    <source>
        <dbReference type="PDB" id="5NIK"/>
    </source>
</evidence>
<organism>
    <name type="scientific">Escherichia coli (strain K12)</name>
    <dbReference type="NCBI Taxonomy" id="83333"/>
    <lineage>
        <taxon>Bacteria</taxon>
        <taxon>Pseudomonadati</taxon>
        <taxon>Pseudomonadota</taxon>
        <taxon>Gammaproteobacteria</taxon>
        <taxon>Enterobacterales</taxon>
        <taxon>Enterobacteriaceae</taxon>
        <taxon>Escherichia</taxon>
    </lineage>
</organism>
<keyword id="KW-0002">3D-structure</keyword>
<keyword id="KW-0046">Antibiotic resistance</keyword>
<keyword id="KW-0067">ATP-binding</keyword>
<keyword id="KW-0997">Cell inner membrane</keyword>
<keyword id="KW-1003">Cell membrane</keyword>
<keyword id="KW-0472">Membrane</keyword>
<keyword id="KW-0547">Nucleotide-binding</keyword>
<keyword id="KW-1185">Reference proteome</keyword>
<keyword id="KW-1278">Translocase</keyword>
<keyword id="KW-0812">Transmembrane</keyword>
<keyword id="KW-1133">Transmembrane helix</keyword>
<keyword id="KW-0813">Transport</keyword>
<accession>P75831</accession>
<comment type="function">
    <text evidence="3 4 5 7">Part of the tripartite efflux system MacAB-TolC. MacB is a non-canonical ABC transporter that contains transmembrane domains (TMD), which form a pore in the inner membrane, and an ATP-binding domain (NBD), which is responsible for energy generation. When overexpressed, the system confers resistance against macrolides composed of 14- and 15-membered lactones but no or weak resistance against 16-membered ones. In addition, the system could also transport R-LPS or a similar glycolipid.</text>
</comment>
<comment type="activity regulation">
    <text evidence="4 5 6">ATPase activity is stimulated by interaction with MacA and inhibited by vanadate.</text>
</comment>
<comment type="biophysicochemical properties">
    <kinetics>
        <KM evidence="4">0.38 mM for ATP (in the presence of MacA)</KM>
        <KM evidence="4">2.3 mM for ATP (in the absence of MacA)</KM>
        <text>kcat is 0.78 sec(-1) for ATP in the presence of MacA. kcat is 0.10 sec(-1) for ATP in the absence of MacA.</text>
    </kinetics>
</comment>
<comment type="subunit">
    <text evidence="2 4 5 6">Homodimer. Part of the tripartite efflux system MacAB-TolC, which is composed of an inner membrane transporter, MacB, a periplasmic membrane fusion protein, MacA, and an outer membrane component, TolC. The complex forms a large protein conduit and can translocate molecules across both the inner and outer membranes. Interacts with MacA.</text>
</comment>
<comment type="interaction">
    <interactant intactId="EBI-1125580">
        <id>P75831</id>
    </interactant>
    <interactant intactId="EBI-551961">
        <id>P75830</id>
        <label>macA</label>
    </interactant>
    <organismsDiffer>false</organismsDiffer>
    <experiments>3</experiments>
</comment>
<comment type="interaction">
    <interactant intactId="EBI-1125580">
        <id>P75831</id>
    </interactant>
    <interactant intactId="EBI-1125580">
        <id>P75831</id>
        <label>macB</label>
    </interactant>
    <organismsDiffer>false</organismsDiffer>
    <experiments>4</experiments>
</comment>
<comment type="subcellular location">
    <subcellularLocation>
        <location evidence="2 3 4">Cell inner membrane</location>
        <topology evidence="2 3 4">Multi-pass membrane protein</topology>
    </subcellularLocation>
</comment>
<comment type="similarity">
    <text evidence="2">Belongs to the ABC transporter superfamily. Macrolide exporter (TC 3.A.1.122) family.</text>
</comment>
<sequence length="648" mass="70702">MTPLLELKDIRRSYPAGDEQVEVLKGISLDIYAGEMVAIVGASGSGKSTLMNILGCLDKATSGTYRVAGQDVATLDADALAQLRREHFGFIFQRYHLLSHLTAEQNVEVPAVYAGLERKQRLLRAQELLQRLGLEDRTEYYPAQLSGGQQQRVSIARALMNGGQVILADEPTGALDSHSGEEVMAILHQLRDRGHTVIIVTHDPQVAAQAERVIEIRDGEIVRNPPAIEKVNVTGGTEPVVNTVSGWRQFVSGFNEALTMAWRALAANKMRTLLTMLGIIIGIASVVSIVVVGDAAKQMVLADIRSIGTNTIDVYPGKDFGDDDPQYQQALKYDDLIAIQKQPWVASATPAVSQNLRLRYNNVDVAASANGVSGDYFNVYGMTFSEGNTFNQEQLNGRAQVVVLDSNTRRQLFPHKADVVGEVILVGNMPARVIGVAEEKQSMFGSSKVLRVWLPYSTMSGRVMGQSWLNSITVRVKEGFDSAEAEQQLTRLLSLRHGKKDFFTWNMDGVLKTVEKTTRTLQLFLTLVAVISLVVGGIGVMNIMLVSVTERTREIGIRMAVGARASDVLQQFLIEAVLVCLVGGALGITLSLLIAFTLQLFLPGWEIGFSPLALLLAFLCSTVTGILFGWLPARNAARLDPVDALARE</sequence>